<evidence type="ECO:0000255" key="1">
    <source>
        <dbReference type="HAMAP-Rule" id="MF_00337"/>
    </source>
</evidence>
<evidence type="ECO:0000256" key="2">
    <source>
        <dbReference type="SAM" id="MobiDB-lite"/>
    </source>
</evidence>
<keyword id="KW-0963">Cytoplasm</keyword>
<keyword id="KW-0269">Exonuclease</keyword>
<keyword id="KW-0378">Hydrolase</keyword>
<keyword id="KW-0540">Nuclease</keyword>
<accession>Q0BAM0</accession>
<dbReference type="EC" id="3.1.11.6" evidence="1"/>
<dbReference type="EMBL" id="CP000441">
    <property type="protein sequence ID" value="ABI88803.1"/>
    <property type="molecule type" value="Genomic_DNA"/>
</dbReference>
<dbReference type="RefSeq" id="WP_006760428.1">
    <property type="nucleotide sequence ID" value="NZ_CP009799.1"/>
</dbReference>
<dbReference type="SMR" id="Q0BAM0"/>
<dbReference type="KEGG" id="bam:Bamb_3248"/>
<dbReference type="PATRIC" id="fig|339670.21.peg.3453"/>
<dbReference type="eggNOG" id="COG1722">
    <property type="taxonomic scope" value="Bacteria"/>
</dbReference>
<dbReference type="Proteomes" id="UP000000662">
    <property type="component" value="Chromosome 2"/>
</dbReference>
<dbReference type="GO" id="GO:0005829">
    <property type="term" value="C:cytosol"/>
    <property type="evidence" value="ECO:0007669"/>
    <property type="project" value="TreeGrafter"/>
</dbReference>
<dbReference type="GO" id="GO:0009318">
    <property type="term" value="C:exodeoxyribonuclease VII complex"/>
    <property type="evidence" value="ECO:0007669"/>
    <property type="project" value="InterPro"/>
</dbReference>
<dbReference type="GO" id="GO:0008855">
    <property type="term" value="F:exodeoxyribonuclease VII activity"/>
    <property type="evidence" value="ECO:0007669"/>
    <property type="project" value="UniProtKB-UniRule"/>
</dbReference>
<dbReference type="GO" id="GO:0006308">
    <property type="term" value="P:DNA catabolic process"/>
    <property type="evidence" value="ECO:0007669"/>
    <property type="project" value="UniProtKB-UniRule"/>
</dbReference>
<dbReference type="Gene3D" id="1.10.287.1040">
    <property type="entry name" value="Exonuclease VII, small subunit"/>
    <property type="match status" value="1"/>
</dbReference>
<dbReference type="HAMAP" id="MF_00337">
    <property type="entry name" value="Exonuc_7_S"/>
    <property type="match status" value="1"/>
</dbReference>
<dbReference type="InterPro" id="IPR003761">
    <property type="entry name" value="Exonuc_VII_S"/>
</dbReference>
<dbReference type="InterPro" id="IPR037004">
    <property type="entry name" value="Exonuc_VII_ssu_sf"/>
</dbReference>
<dbReference type="NCBIfam" id="NF002141">
    <property type="entry name" value="PRK00977.1-5"/>
    <property type="match status" value="1"/>
</dbReference>
<dbReference type="NCBIfam" id="TIGR01280">
    <property type="entry name" value="xseB"/>
    <property type="match status" value="1"/>
</dbReference>
<dbReference type="PANTHER" id="PTHR34137">
    <property type="entry name" value="EXODEOXYRIBONUCLEASE 7 SMALL SUBUNIT"/>
    <property type="match status" value="1"/>
</dbReference>
<dbReference type="PANTHER" id="PTHR34137:SF1">
    <property type="entry name" value="EXODEOXYRIBONUCLEASE 7 SMALL SUBUNIT"/>
    <property type="match status" value="1"/>
</dbReference>
<dbReference type="Pfam" id="PF02609">
    <property type="entry name" value="Exonuc_VII_S"/>
    <property type="match status" value="1"/>
</dbReference>
<dbReference type="SUPFAM" id="SSF116842">
    <property type="entry name" value="XseB-like"/>
    <property type="match status" value="1"/>
</dbReference>
<feature type="chain" id="PRO_0000303695" description="Exodeoxyribonuclease 7 small subunit">
    <location>
        <begin position="1"/>
        <end position="97"/>
    </location>
</feature>
<feature type="region of interest" description="Disordered" evidence="2">
    <location>
        <begin position="1"/>
        <end position="22"/>
    </location>
</feature>
<comment type="function">
    <text evidence="1">Bidirectionally degrades single-stranded DNA into large acid-insoluble oligonucleotides, which are then degraded further into small acid-soluble oligonucleotides.</text>
</comment>
<comment type="catalytic activity">
    <reaction evidence="1">
        <text>Exonucleolytic cleavage in either 5'- to 3'- or 3'- to 5'-direction to yield nucleoside 5'-phosphates.</text>
        <dbReference type="EC" id="3.1.11.6"/>
    </reaction>
</comment>
<comment type="subunit">
    <text evidence="1">Heterooligomer composed of large and small subunits.</text>
</comment>
<comment type="subcellular location">
    <subcellularLocation>
        <location evidence="1">Cytoplasm</location>
    </subcellularLocation>
</comment>
<comment type="similarity">
    <text evidence="1">Belongs to the XseB family.</text>
</comment>
<proteinExistence type="inferred from homology"/>
<sequence length="97" mass="10207">MAKTASPGATPPDNGTEPLPDNYEMALAELETLVARMEGGALSLEDSLAAYRRGANLVAFCQQQLEKVEQQVRVLDGATLKPLSSGTAATDGEDDDL</sequence>
<reference key="1">
    <citation type="submission" date="2006-08" db="EMBL/GenBank/DDBJ databases">
        <title>Complete sequence of chromosome 2 of Burkholderia cepacia AMMD.</title>
        <authorList>
            <person name="Copeland A."/>
            <person name="Lucas S."/>
            <person name="Lapidus A."/>
            <person name="Barry K."/>
            <person name="Detter J.C."/>
            <person name="Glavina del Rio T."/>
            <person name="Hammon N."/>
            <person name="Israni S."/>
            <person name="Pitluck S."/>
            <person name="Bruce D."/>
            <person name="Chain P."/>
            <person name="Malfatti S."/>
            <person name="Shin M."/>
            <person name="Vergez L."/>
            <person name="Schmutz J."/>
            <person name="Larimer F."/>
            <person name="Land M."/>
            <person name="Hauser L."/>
            <person name="Kyrpides N."/>
            <person name="Kim E."/>
            <person name="Parke J."/>
            <person name="Coenye T."/>
            <person name="Konstantinidis K."/>
            <person name="Ramette A."/>
            <person name="Tiedje J."/>
            <person name="Richardson P."/>
        </authorList>
    </citation>
    <scope>NUCLEOTIDE SEQUENCE [LARGE SCALE GENOMIC DNA]</scope>
    <source>
        <strain>ATCC BAA-244 / DSM 16087 / CCUG 44356 / LMG 19182 / AMMD</strain>
    </source>
</reference>
<name>EX7S_BURCM</name>
<organism>
    <name type="scientific">Burkholderia ambifaria (strain ATCC BAA-244 / DSM 16087 / CCUG 44356 / LMG 19182 / AMMD)</name>
    <name type="common">Burkholderia cepacia (strain AMMD)</name>
    <dbReference type="NCBI Taxonomy" id="339670"/>
    <lineage>
        <taxon>Bacteria</taxon>
        <taxon>Pseudomonadati</taxon>
        <taxon>Pseudomonadota</taxon>
        <taxon>Betaproteobacteria</taxon>
        <taxon>Burkholderiales</taxon>
        <taxon>Burkholderiaceae</taxon>
        <taxon>Burkholderia</taxon>
        <taxon>Burkholderia cepacia complex</taxon>
    </lineage>
</organism>
<gene>
    <name evidence="1" type="primary">xseB</name>
    <name type="ordered locus">Bamb_3248</name>
</gene>
<protein>
    <recommendedName>
        <fullName evidence="1">Exodeoxyribonuclease 7 small subunit</fullName>
        <ecNumber evidence="1">3.1.11.6</ecNumber>
    </recommendedName>
    <alternativeName>
        <fullName evidence="1">Exodeoxyribonuclease VII small subunit</fullName>
        <shortName evidence="1">Exonuclease VII small subunit</shortName>
    </alternativeName>
</protein>